<keyword id="KW-0002">3D-structure</keyword>
<keyword id="KW-0167">Capsid protein</keyword>
<keyword id="KW-0165">Cleavage on pair of basic residues</keyword>
<keyword id="KW-0903">Direct protein sequencing</keyword>
<keyword id="KW-1015">Disulfide bond</keyword>
<keyword id="KW-1170">Fusion of virus membrane with host endosomal membrane</keyword>
<keyword id="KW-1168">Fusion of virus membrane with host membrane</keyword>
<keyword id="KW-0325">Glycoprotein</keyword>
<keyword id="KW-1032">Host cell membrane</keyword>
<keyword id="KW-1035">Host cytoplasm</keyword>
<keyword id="KW-1038">Host endoplasmic reticulum</keyword>
<keyword id="KW-1040">Host Golgi apparatus</keyword>
<keyword id="KW-1043">Host membrane</keyword>
<keyword id="KW-1048">Host nucleus</keyword>
<keyword id="KW-0945">Host-virus interaction</keyword>
<keyword id="KW-0378">Hydrolase</keyword>
<keyword id="KW-0407">Ion channel</keyword>
<keyword id="KW-0406">Ion transport</keyword>
<keyword id="KW-0449">Lipoprotein</keyword>
<keyword id="KW-0472">Membrane</keyword>
<keyword id="KW-0564">Palmitate</keyword>
<keyword id="KW-0645">Protease</keyword>
<keyword id="KW-0694">RNA-binding</keyword>
<keyword id="KW-0720">Serine protease</keyword>
<keyword id="KW-1144">T=4 icosahedral capsid protein</keyword>
<keyword id="KW-0812">Transmembrane</keyword>
<keyword id="KW-1133">Transmembrane helix</keyword>
<keyword id="KW-0813">Transport</keyword>
<keyword id="KW-1161">Viral attachment to host cell</keyword>
<keyword id="KW-1234">Viral attachment to host entry receptor</keyword>
<keyword id="KW-1182">Viral ion channel</keyword>
<keyword id="KW-1162">Viral penetration into host cytoplasm</keyword>
<keyword id="KW-0946">Virion</keyword>
<keyword id="KW-1160">Virus entry into host cell</keyword>
<organismHost>
    <name type="scientific">Aedes</name>
    <dbReference type="NCBI Taxonomy" id="7158"/>
</organismHost>
<organismHost>
    <name type="scientific">Culex annulirostris</name>
    <name type="common">Common banded mosquito</name>
    <dbReference type="NCBI Taxonomy" id="162997"/>
</organismHost>
<organismHost>
    <name type="scientific">Homo sapiens</name>
    <name type="common">Human</name>
    <dbReference type="NCBI Taxonomy" id="9606"/>
</organismHost>
<organismHost>
    <name type="scientific">Macropus sp.</name>
    <name type="common">kangaroo</name>
    <dbReference type="NCBI Taxonomy" id="9322"/>
</organismHost>
<proteinExistence type="evidence at protein level"/>
<comment type="function">
    <molecule>Capsid protein</molecule>
    <text evidence="2 3 6">Forms an icosahedral capsid with a T=4 symmetry composed of 240 copies of the capsid protein surrounded by a lipid membrane through which penetrate 80 spikes composed of trimers of E1-E2 heterodimers (By similarity). The capsid protein binds to the viral RNA genome at a site adjacent to a ribosome binding site for viral genome translation following genome release (By similarity). Possesses a protease activity that results in its autocatalytic cleavage from the nascent structural protein (By similarity). Following its self-cleavage, the capsid protein transiently associates with ribosomes, and within several minutes the protein binds to viral RNA and rapidly assembles into icosahedric core particles (By similarity). The resulting nucleocapsid eventually associates with the cytoplasmic domain of the spike glycoprotein E2 at the cell membrane, leading to budding and formation of mature virions (By similarity). In case of infection, new virions attach to target cells and after clathrin-mediated endocytosis their membrane fuses with the host endosomal membrane (By similarity). This leads to the release of the nucleocapsid into the cytoplasm, followed by an uncoating event necessary for the genomic RNA to become accessible (By similarity). The uncoating might be triggered by the interaction of capsid proteins with ribosomes (By similarity). Binding of ribosomes would release the genomic RNA since the same region is genomic RNA-binding and ribosome-binding (By similarity). Specifically inhibits interleukin-1 receptor-associated kinase 1/IRAK1-dependent signaling during viral entry, representing a means by which the alphaviruses may evade innate immune detection and activation prior to viral gene expression (By similarity).</text>
</comment>
<comment type="function">
    <molecule>Assembly protein E3</molecule>
    <text evidence="2">Provides the signal sequence for the translocation of the precursor of protein E3/E2 to the host endoplasmic reticulum. Furin-cleaved E3 remains associated with spike glycoprotein E1 and mediates pH protection of the latter during the transport via the secretory pathway. After virion release from the host cell, the assembly protein E3 is gradually released in the extracellular space.</text>
</comment>
<comment type="function">
    <molecule>Spike glycoprotein E2</molecule>
    <text evidence="2 16 17">Plays a role in viral attachment to target host cell, by binding to the cell receptor MXRA8 (PubMed:32783883). The host LDLR may also act as a cell receptor for viral entry (PubMed:38245515). Synthesized as a p62 precursor which is processed by furin at the cell membrane just before virion budding, giving rise to E2-E1 heterodimer. The p62-E1 heterodimer is stable, whereas E2-E1 is unstable and dissociate at low pH. p62 is processed at the last step, presumably to avoid E1 fusion activation before its final export to cell surface. E2 C-terminus contains a transitory transmembrane that would be disrupted by palmitoylation, resulting in reorientation of the C-terminal tail from lumenal to cytoplasmic side. This step is critical since E2 C-terminus is involved in budding by interacting with capsid proteins. This release of E2 C-terminus in cytoplasm occurs lately in protein export, and precludes premature assembly of particles at the endoplasmic reticulum membrane (By similarity).</text>
</comment>
<comment type="function">
    <molecule>6K protein</molecule>
    <text evidence="2 3 15 19">Acts as a viroporin that participates in virus glycoprotein processing and transport to the plasma membrane, cell permeabilization and budding of viral particles (Probable). The cation channel is permeable to Na(+)&gt;K(+)&gt;Ca(2+) in vitro (PubMed:12228229). Disrupts the calcium homeostasis of the cell, probably at the endoplasmic reticulum level (By similarity). This leads to cytoplasmic calcium elevation (By similarity). Because of its lipophilic properties, the 6K protein is postulated to influence the selection of lipids that interact with the transmembrane domains of the glycoproteins, which, in turn, affects the deformability of the bilayer required for the extreme curvature that occurs as budding proceeds. Present in low amount in virions, about 3% compared to viral glycoproteins (By similarity).</text>
</comment>
<comment type="function">
    <molecule>Spike glycoprotein E1</molecule>
    <text evidence="3">Class II viral fusion protein. Fusion activity is inactive as long as E1 is bound to E2 in mature virion. After virus attachment to target cell via host MXRA8 and endocytosis, acidification of the endosome induce dissociation of E1/E2 heterodimer and concomitant trimerization of the E1 subunits. This E1 trimer is fusion active, and promotes release of viral nucleocapsid in cytoplasm after endosome and viral membrane fusion. Efficient fusion requires the presence of cholesterol and sphingolipid in the target membrane.</text>
</comment>
<comment type="catalytic activity">
    <reaction evidence="2">
        <text>Autocatalytic release of the core protein from the N-terminus of the togavirus structural polyprotein by hydrolysis of a -Trp-|-Ser- bond.</text>
        <dbReference type="EC" id="3.4.21.90"/>
    </reaction>
</comment>
<comment type="subunit">
    <molecule>Capsid protein</molecule>
    <text evidence="3 10 11">Homodimer (By similarity). Homomultimer (By similarity). Interacts with host karyopherin KPNA4; this interaction allows the nuclear import of the viral capsid protein (By similarity). Interacts with spike glycoprotein E2 (By similarity). Interacts with host IRAK1; the interaction leads to inhibition of IRAK1-dependent signaling (By similarity).</text>
</comment>
<comment type="subunit">
    <molecule>Precursor of protein E3/E2</molecule>
    <text evidence="2 3 5 11">The precursor of protein E3/E2 and E1 form a heterodimer shortly after synthesis (By similarity).</text>
</comment>
<comment type="subunit">
    <molecule>Spike glycoprotein E1</molecule>
    <text evidence="2 3 9 11 17">Interacts with spike glycoprotein E2 (By similarity). The precursor of protein E3/E2 and E1 form a heterodimer shortly after synthesis (By similarity). Processing of the precursor of protein E3/E2 into E2 and E3 results in a heterodimer of the spike glycoproteins E2 and E1 (By similarity). Spike at virion surface are constituted of a trimer of E2-E1 heterodimers (By similarity). After target cell attachment and endocytosis, E1 change conformation to form homotrimers (By similarity). Interacts with 6K protein (By similarity). E1/E2 heterodimer interacts with host LDLR (PubMed:38245515).</text>
</comment>
<comment type="subunit">
    <molecule>Spike glycoprotein E2</molecule>
    <text evidence="3 16">Interacts with spike glycoprotein E1 (By similarity). Processing of the precursor of protein E3/E2 into E2 and E3 results in a heterodimer of the spike glycoproteins E2 and E1 (By similarity). Spike at virion surface are constituted of a trimer of E2-E1 heterodimers (By similarity). Interacts with 6K protein (By similarity). Interacts with host MXRA8; this interaction mediates virus entry (PubMed:32783883).</text>
</comment>
<comment type="subunit">
    <molecule>6K protein</molecule>
    <text evidence="3 8">Oligomer (By similarity). Interacts with spike glycoprotein E1. Interacts with spike glycoprotein E2 (By similarity).</text>
</comment>
<comment type="subcellular location">
    <molecule>Capsid protein</molecule>
    <subcellularLocation>
        <location evidence="3">Virion</location>
    </subcellularLocation>
    <subcellularLocation>
        <location evidence="11">Host cytoplasm</location>
    </subcellularLocation>
    <subcellularLocation>
        <location evidence="3">Host cell membrane</location>
    </subcellularLocation>
    <subcellularLocation>
        <location evidence="11">Host nucleus</location>
    </subcellularLocation>
    <text evidence="11">Shuttles between the cytoplasm and the nucleus.</text>
</comment>
<comment type="subcellular location">
    <molecule>Spike glycoprotein E2</molecule>
    <subcellularLocation>
        <location evidence="11">Virion membrane</location>
        <topology evidence="12">Single-pass type I membrane protein</topology>
    </subcellularLocation>
    <subcellularLocation>
        <location evidence="3">Host cell membrane</location>
        <topology evidence="11">Single-pass type I membrane protein</topology>
    </subcellularLocation>
</comment>
<comment type="subcellular location">
    <molecule>6K protein</molecule>
    <subcellularLocation>
        <location evidence="3">Host cell membrane</location>
        <topology evidence="12">Multi-pass membrane protein</topology>
    </subcellularLocation>
    <subcellularLocation>
        <location evidence="3">Virion membrane</location>
        <topology evidence="12">Multi-pass membrane protein</topology>
    </subcellularLocation>
    <subcellularLocation>
        <location evidence="3">Host Golgi apparatus</location>
    </subcellularLocation>
    <subcellularLocation>
        <location>Host Golgi apparatus</location>
        <location>Host trans-Golgi network</location>
    </subcellularLocation>
    <subcellularLocation>
        <location evidence="3">Host endoplasmic reticulum</location>
    </subcellularLocation>
</comment>
<comment type="subcellular location">
    <molecule>Spike glycoprotein E1</molecule>
    <subcellularLocation>
        <location evidence="11">Virion membrane</location>
        <topology evidence="12">Single-pass type I membrane protein</topology>
    </subcellularLocation>
    <subcellularLocation>
        <location evidence="3 11">Host cell membrane</location>
        <topology evidence="12">Single-pass type I membrane protein</topology>
    </subcellularLocation>
</comment>
<comment type="domain">
    <molecule>Capsid protein</molecule>
    <text evidence="3 4">The very N-terminus also plays a role in the particle assembly process (By similarity). The N-terminus also contains a nuclear localization signal and a supra nuclear export signal (supraNES), which is an unusually strong NES that mediates host CRM1 binding in the absence of RanGTP and thus can bind CRM1, not only in the nucleus, but also in the cytoplasm (By similarity). The C-terminus functions as a protease during translation to cleave itself from the translating structural polyprotein (By similarity).</text>
</comment>
<comment type="domain">
    <text evidence="2">Structural polyprotein: As soon as the capsid protein has been autocleaved, an internal uncleaved signal peptide directs the remaining polyprotein to the endoplasmic reticulum.</text>
</comment>
<comment type="PTM">
    <text evidence="2">Structural polyprotein: Specific enzymatic cleavages in vivo yield mature proteins. Capsid protein is auto-cleaved during polyprotein translation, unmasking a signal peptide at the N-terminus of the precursor of E3/E2 (By similarity). The remaining polyprotein is then targeted to the host endoplasmic reticulum, where host signal peptidase cleaves it into pE2, 6K and E1 proteins. pE2 is further processed to mature E3 and E2 by host furin in trans-Golgi vesicle (By similarity).</text>
</comment>
<comment type="PTM">
    <molecule>Spike glycoprotein E2</molecule>
    <text evidence="2">Palmitoylated via thioester bonds. These palmitoylations may induce disruption of the C-terminus transmembrane. This would result in the reorientation of E2 C-terminus from lumenal to cytoplasmic side.</text>
</comment>
<comment type="PTM">
    <molecule>Spike glycoprotein E1</molecule>
    <text evidence="2">N-glycosylated.</text>
</comment>
<comment type="PTM">
    <molecule>Spike glycoprotein E2</molecule>
    <text evidence="2">N-glycosylated.</text>
</comment>
<comment type="PTM">
    <molecule>Assembly protein E3</molecule>
    <text evidence="2">N-glycosylated.</text>
</comment>
<comment type="PTM">
    <molecule>6K protein</molecule>
    <text evidence="2">Palmitoylated via thioester bonds.</text>
</comment>
<comment type="miscellaneous">
    <text evidence="18">Belongs to the Old World alphaviruses that usually cause fever, maculopapular rash, arthralgia and myalgia.</text>
</comment>
<comment type="miscellaneous">
    <text evidence="10">Structural polyprotein: Translated from a subgenomic RNA synthesized during togavirus replication.</text>
</comment>
<sequence length="1254" mass="138468">MNYIPTQTFYGRRWRPRPAFRPWQVSMQPTPTMVTPMLQAPDLQAQQMQQLISAVSALTTKQNVKAPKGQRQKKQQKPKEKKENQKKKPTQKKKQQQKPKPQAKKKKPGRRERMCMKIENDCIFEVKLDGKVTGYACLVGDKVMKPAHVKGTIDNPDLAKLTYKKSSKYDLECAQIPVHMKSDASKYTHEKPEGHYNWHHGAVQYSGGRFTIPTGAGKPGDSGRPIFDNKGRVVAIVLGGANEGARTALSVVTWTKDMVTRVTPEGTEEWSAALMMCILANTSFPCSSPPCYPCCYEKQPEQTLRMLEDNVNRPGYYELLEASMTCRNRSRHRRSVTEHFNVYKATRPYLAYCADCGDGYFCYSPVAIEKIRDEAPDGMLKIQVSAQIGLDKAGTHAHTKIRYMAGHDVQESKRDSLRVYTSAACSIHGTMGHFIVAHCPPGDYLKVSFEDADSHVKACKVQYKHDPLPVGREKFVVRPHFGVELPCTSYQLTTAPTDEEIDMHTPPDIPDRTLLSQTAGNVKITAGGRTIRYNCTCGRDNVGTTSTDKTINTCKIDQCHAAVTSHDKWQFTSPFVPRADQTARRGKVHVPFPLTNVTCRVPLARAPDVTYGKKEVTLRLHPDHPTLFSYRSLGAEPHPYEEWVDKFSERIIPVTEEGIEYQWGNNPPVRLWAQLTTEGKPHGWPHEIIQYYYGLYPAATIAAVSGASLMALLTLAATCCMLATARRKCLTPYALTPGAVVPLTLGLLCCAPRANAASFAETMAYLWDENKTLFWMEFAAPAAALALLACCIKSLICCCKPFSFLVLLSLGASAKAYEHTATIPNVVGFPYKAHIERNGFSPMTLQLEVVETSWEPTLNLEYITCEYKTVVPSPFIKCCGTSECSSKEQPDYQCKVYTGVYPFMWGGAYCFCDSENTQLSEAYVDRSDVCKHDHASAYKAHTASLKATIRISYGTINQTTEAFVNGEHAVNVGGSKFIFGPISTAWSPFDNKIVVYKDDVYNQDFPPYGSGQPGRFGDIQSRTVESKDLYANTALKLSRPSPGVVHVPYTPTPSGFKYWLKEKGSSLNTKAPFGCKIKTNPVRAMDCAVGSIPVSMDIPDSAFTRVVDAPAVTDLSCQVVVCTHSSDFGGVATLSYKTDKPGKCAVHSHSNVATLQEATVDVKEDGKVTVHFSTASASPAFKVSVCDAKTTCTAACEPPKDHIVPYGASHNNQVFPDMSGTAMTWVQRLASGLGGLALIAVVVLVLVTCITMRR</sequence>
<name>POLS_RRVT</name>
<organism>
    <name type="scientific">Ross river virus (strain T48)</name>
    <name type="common">RRV</name>
    <dbReference type="NCBI Taxonomy" id="11032"/>
    <lineage>
        <taxon>Viruses</taxon>
        <taxon>Riboviria</taxon>
        <taxon>Orthornavirae</taxon>
        <taxon>Kitrinoviricota</taxon>
        <taxon>Alsuviricetes</taxon>
        <taxon>Martellivirales</taxon>
        <taxon>Togaviridae</taxon>
        <taxon>Alphavirus</taxon>
        <taxon>Ross River virus</taxon>
    </lineage>
</organism>
<evidence type="ECO:0000250" key="1"/>
<evidence type="ECO:0000250" key="2">
    <source>
        <dbReference type="UniProtKB" id="P03315"/>
    </source>
</evidence>
<evidence type="ECO:0000250" key="3">
    <source>
        <dbReference type="UniProtKB" id="P03316"/>
    </source>
</evidence>
<evidence type="ECO:0000250" key="4">
    <source>
        <dbReference type="UniProtKB" id="P09592"/>
    </source>
</evidence>
<evidence type="ECO:0000250" key="5">
    <source>
        <dbReference type="UniProtKB" id="P0DOK1"/>
    </source>
</evidence>
<evidence type="ECO:0000250" key="6">
    <source>
        <dbReference type="UniProtKB" id="P27284"/>
    </source>
</evidence>
<evidence type="ECO:0000250" key="7">
    <source>
        <dbReference type="UniProtKB" id="P89946"/>
    </source>
</evidence>
<evidence type="ECO:0000250" key="8">
    <source>
        <dbReference type="UniProtKB" id="Q5XXP3"/>
    </source>
</evidence>
<evidence type="ECO:0000250" key="9">
    <source>
        <dbReference type="UniProtKB" id="Q5Y388"/>
    </source>
</evidence>
<evidence type="ECO:0000250" key="10">
    <source>
        <dbReference type="UniProtKB" id="Q86925"/>
    </source>
</evidence>
<evidence type="ECO:0000250" key="11">
    <source>
        <dbReference type="UniProtKB" id="Q8JUX5"/>
    </source>
</evidence>
<evidence type="ECO:0000255" key="12"/>
<evidence type="ECO:0000255" key="13">
    <source>
        <dbReference type="PROSITE-ProRule" id="PRU01027"/>
    </source>
</evidence>
<evidence type="ECO:0000256" key="14">
    <source>
        <dbReference type="SAM" id="MobiDB-lite"/>
    </source>
</evidence>
<evidence type="ECO:0000269" key="15">
    <source>
    </source>
</evidence>
<evidence type="ECO:0000269" key="16">
    <source>
    </source>
</evidence>
<evidence type="ECO:0000269" key="17">
    <source>
    </source>
</evidence>
<evidence type="ECO:0000305" key="18"/>
<evidence type="ECO:0000305" key="19">
    <source>
    </source>
</evidence>
<evidence type="ECO:0007744" key="20">
    <source>
        <dbReference type="PDB" id="6VYV"/>
    </source>
</evidence>
<reference key="1">
    <citation type="journal article" date="1983" name="Virology">
        <title>Ross River virus 26 s RNA: complete nucleotide sequence and deduced sequence of the encoded structural proteins.</title>
        <authorList>
            <person name="Dalgarno L."/>
            <person name="Rice C.M."/>
            <person name="Strauss J.H."/>
        </authorList>
    </citation>
    <scope>NUCLEOTIDE SEQUENCE [GENOMIC RNA]</scope>
</reference>
<reference key="2">
    <citation type="journal article" date="1982" name="Proc. Natl. Acad. Sci. U.S.A.">
        <title>Sequence studies of several alphavirus genomic RNAs in the region containing the start of the subgenomic RNA.</title>
        <authorList>
            <person name="Ou J.-H."/>
            <person name="Rice C.M."/>
            <person name="Dalgarno L."/>
            <person name="Strauss E.G."/>
            <person name="Strauss J.H."/>
        </authorList>
    </citation>
    <scope>NUCLEOTIDE SEQUENCE [GENOMIC RNA] OF 1-11</scope>
</reference>
<reference key="3">
    <citation type="journal article" date="1988" name="Virology">
        <title>Genetic stability of Ross River virus during epidemic spread in nonimmune humans.</title>
        <authorList>
            <person name="Burness A.T.H."/>
            <person name="Pardoe I."/>
            <person name="Faragher S.G."/>
            <person name="Vrati S."/>
            <person name="Dalgarno L."/>
        </authorList>
    </citation>
    <scope>NUCLEOTIDE SEQUENCE [GENOMIC RNA] OF 335-756</scope>
</reference>
<reference key="4">
    <citation type="journal article" date="1984" name="Proc. Natl. Acad. Sci. U.S.A.">
        <title>An evolutionary tree relating eight alphaviruses, based on amino-terminal sequences of their glycoproteins.</title>
        <authorList>
            <person name="Bell J.R."/>
            <person name="Kinney R.M."/>
            <person name="Trent D.W."/>
            <person name="Strauss E.G."/>
            <person name="Strauss J.H."/>
        </authorList>
    </citation>
    <scope>PROTEIN SEQUENCE OF 335-403 AND 817-882</scope>
</reference>
<reference key="5">
    <citation type="journal article" date="2002" name="J. Biol. Chem.">
        <title>Alphavirus 6K proteins form ion channels.</title>
        <authorList>
            <person name="Melton J.V."/>
            <person name="Ewart G.D."/>
            <person name="Weir R.C."/>
            <person name="Board P.G."/>
            <person name="Lee E."/>
            <person name="Gage P.W."/>
        </authorList>
    </citation>
    <scope>FUNCTION (PROTEIN 6K)</scope>
</reference>
<reference key="6">
    <citation type="journal article" date="2024" name="Nat. Commun.">
        <title>LDLR is used as a cell entry receptor by multiple alphaviruses.</title>
        <authorList>
            <person name="Zhai X."/>
            <person name="Li X."/>
            <person name="Veit M."/>
            <person name="Wang N."/>
            <person name="Wang Y."/>
            <person name="Merits A."/>
            <person name="Jiang Z."/>
            <person name="Qin Y."/>
            <person name="Zhang X."/>
            <person name="Qi K."/>
            <person name="Jiao H."/>
            <person name="He W.T."/>
            <person name="Chen Y."/>
            <person name="Mao Y."/>
            <person name="Su S."/>
        </authorList>
    </citation>
    <scope>FUNCTION (SPIKE GLYCOPROTEIN E2)</scope>
    <scope>INTERACTION WITH HOST LDLR (SPIKE GLYCOPROTEIN E1)</scope>
    <scope>INTERACTION WITH HOST LDLR (SPIKE GLYCOPROTEIN E2)</scope>
</reference>
<reference evidence="20" key="7">
    <citation type="journal article" date="2020" name="Cell Host Microbe">
        <title>Human mAbs Broadly Protect against Arthritogenic Alphaviruses by Recognizing Conserved Elements of the Mxra8 Receptor-Binding Site.</title>
        <authorList>
            <person name="Powell L.A."/>
            <person name="Miller A."/>
            <person name="Fox J.M."/>
            <person name="Kose N."/>
            <person name="Klose T."/>
            <person name="Kim A.S."/>
            <person name="Bombardi R."/>
            <person name="Tennekoon R.N."/>
            <person name="Dharshan de Silva A."/>
            <person name="Carnahan R.H."/>
            <person name="Diamond M.S."/>
            <person name="Rossmann M.G."/>
            <person name="Kuhn R.J."/>
            <person name="Crowe J.E. Jr."/>
        </authorList>
    </citation>
    <scope>STRUCTURE BY ELECTRON MICROSCOPY (6.33 ANGSTROMS) OF 335-675 AND 817-1209</scope>
    <scope>RECEPTOR-BINDING REGION</scope>
    <scope>INTERACTION WITH HOST RECEPTOR MXRA8 (SPIKE GLYCOPROTEIN E2)</scope>
    <scope>FUNCTION (SPIKE GLYCOPROTEIN E2)</scope>
    <source>
        <strain>T48</strain>
    </source>
</reference>
<accession>P08491</accession>
<accession>Q88613</accession>
<accession>Q88614</accession>
<accession>Q88615</accession>
<accession>Q88616</accession>
<accession>Q88617</accession>
<accession>Q88728</accession>
<protein>
    <recommendedName>
        <fullName>Structural polyprotein</fullName>
    </recommendedName>
    <alternativeName>
        <fullName>p130</fullName>
    </alternativeName>
    <component>
        <recommendedName>
            <fullName>Capsid protein</fullName>
            <ecNumber evidence="2">3.4.21.90</ecNumber>
        </recommendedName>
        <alternativeName>
            <fullName>Coat protein</fullName>
            <shortName>C</shortName>
        </alternativeName>
    </component>
    <component>
        <recommendedName>
            <fullName>Precursor of protein E3/E2</fullName>
        </recommendedName>
        <alternativeName>
            <fullName>p62</fullName>
        </alternativeName>
        <alternativeName>
            <fullName>pE2</fullName>
        </alternativeName>
    </component>
    <component>
        <recommendedName>
            <fullName>Assembly protein E3</fullName>
        </recommendedName>
    </component>
    <component>
        <recommendedName>
            <fullName>Spike glycoprotein E2</fullName>
        </recommendedName>
        <alternativeName>
            <fullName>E2 envelope glycoprotein</fullName>
        </alternativeName>
    </component>
    <component>
        <recommendedName>
            <fullName>6K protein</fullName>
        </recommendedName>
    </component>
    <component>
        <recommendedName>
            <fullName>Spike glycoprotein E1</fullName>
        </recommendedName>
        <alternativeName>
            <fullName>E1 envelope glycoprotein</fullName>
        </alternativeName>
    </component>
</protein>
<dbReference type="EC" id="3.4.21.90" evidence="2"/>
<dbReference type="EMBL" id="K00046">
    <property type="protein sequence ID" value="AAA47404.1"/>
    <property type="molecule type" value="Genomic_RNA"/>
</dbReference>
<dbReference type="EMBL" id="M23708">
    <property type="protein sequence ID" value="AAA47405.1"/>
    <property type="molecule type" value="Genomic_RNA"/>
</dbReference>
<dbReference type="PIR" id="A31833">
    <property type="entry name" value="VHWV48"/>
</dbReference>
<dbReference type="PIR" id="G37264">
    <property type="entry name" value="G37264"/>
</dbReference>
<dbReference type="PDB" id="6VYV">
    <property type="method" value="EM"/>
    <property type="resolution" value="6.33 A"/>
    <property type="chains" value="A/B/C/D=817-1209, E/F/G/H=335-675"/>
</dbReference>
<dbReference type="PDBsum" id="6VYV"/>
<dbReference type="EMDB" id="EMD-21473"/>
<dbReference type="SMR" id="P08491"/>
<dbReference type="MEROPS" id="S03.001"/>
<dbReference type="TCDB" id="1.G.4.1.2">
    <property type="family name" value="the viral pore-forming membrane fusion protein-4 (vmfp4) family"/>
</dbReference>
<dbReference type="SwissPalm" id="P08491"/>
<dbReference type="GO" id="GO:0030430">
    <property type="term" value="C:host cell cytoplasm"/>
    <property type="evidence" value="ECO:0007669"/>
    <property type="project" value="UniProtKB-SubCell"/>
</dbReference>
<dbReference type="GO" id="GO:0042025">
    <property type="term" value="C:host cell nucleus"/>
    <property type="evidence" value="ECO:0007669"/>
    <property type="project" value="UniProtKB-SubCell"/>
</dbReference>
<dbReference type="GO" id="GO:0020002">
    <property type="term" value="C:host cell plasma membrane"/>
    <property type="evidence" value="ECO:0007669"/>
    <property type="project" value="UniProtKB-SubCell"/>
</dbReference>
<dbReference type="GO" id="GO:0016020">
    <property type="term" value="C:membrane"/>
    <property type="evidence" value="ECO:0007669"/>
    <property type="project" value="UniProtKB-KW"/>
</dbReference>
<dbReference type="GO" id="GO:0039619">
    <property type="term" value="C:T=4 icosahedral viral capsid"/>
    <property type="evidence" value="ECO:0007669"/>
    <property type="project" value="UniProtKB-KW"/>
</dbReference>
<dbReference type="GO" id="GO:0055036">
    <property type="term" value="C:virion membrane"/>
    <property type="evidence" value="ECO:0007669"/>
    <property type="project" value="UniProtKB-SubCell"/>
</dbReference>
<dbReference type="GO" id="GO:0003723">
    <property type="term" value="F:RNA binding"/>
    <property type="evidence" value="ECO:0007669"/>
    <property type="project" value="UniProtKB-KW"/>
</dbReference>
<dbReference type="GO" id="GO:0004252">
    <property type="term" value="F:serine-type endopeptidase activity"/>
    <property type="evidence" value="ECO:0007669"/>
    <property type="project" value="InterPro"/>
</dbReference>
<dbReference type="GO" id="GO:0005198">
    <property type="term" value="F:structural molecule activity"/>
    <property type="evidence" value="ECO:0007669"/>
    <property type="project" value="InterPro"/>
</dbReference>
<dbReference type="GO" id="GO:0039654">
    <property type="term" value="P:fusion of virus membrane with host endosome membrane"/>
    <property type="evidence" value="ECO:0007669"/>
    <property type="project" value="UniProtKB-KW"/>
</dbReference>
<dbReference type="GO" id="GO:0006508">
    <property type="term" value="P:proteolysis"/>
    <property type="evidence" value="ECO:0007669"/>
    <property type="project" value="UniProtKB-KW"/>
</dbReference>
<dbReference type="GO" id="GO:0046718">
    <property type="term" value="P:symbiont entry into host cell"/>
    <property type="evidence" value="ECO:0007669"/>
    <property type="project" value="UniProtKB-KW"/>
</dbReference>
<dbReference type="GO" id="GO:0039722">
    <property type="term" value="P:symbiont-mediated suppression of host toll-like receptor signaling pathway"/>
    <property type="evidence" value="ECO:0000250"/>
    <property type="project" value="UniProtKB"/>
</dbReference>
<dbReference type="GO" id="GO:0019062">
    <property type="term" value="P:virion attachment to host cell"/>
    <property type="evidence" value="ECO:0007669"/>
    <property type="project" value="UniProtKB-KW"/>
</dbReference>
<dbReference type="FunFam" id="2.40.10.10:FF:000076">
    <property type="entry name" value="Structural polyprotein"/>
    <property type="match status" value="1"/>
</dbReference>
<dbReference type="FunFam" id="2.60.98.10:FF:000002">
    <property type="entry name" value="Structural polyprotein"/>
    <property type="match status" value="1"/>
</dbReference>
<dbReference type="Gene3D" id="1.10.287.2230">
    <property type="match status" value="1"/>
</dbReference>
<dbReference type="Gene3D" id="2.60.40.350">
    <property type="match status" value="1"/>
</dbReference>
<dbReference type="Gene3D" id="2.60.40.3200">
    <property type="entry name" value="Alphavirus E2 glycoprotein, A domain"/>
    <property type="match status" value="1"/>
</dbReference>
<dbReference type="Gene3D" id="2.60.40.4310">
    <property type="entry name" value="Alphavirus E2 glycoprotein, domain B"/>
    <property type="match status" value="1"/>
</dbReference>
<dbReference type="Gene3D" id="2.60.40.2400">
    <property type="entry name" value="Alphavirus E2 glycoprotein, domain C"/>
    <property type="match status" value="1"/>
</dbReference>
<dbReference type="Gene3D" id="2.60.98.10">
    <property type="entry name" value="Tick-borne Encephalitis virus Glycoprotein, domain 1"/>
    <property type="match status" value="3"/>
</dbReference>
<dbReference type="Gene3D" id="2.40.10.10">
    <property type="entry name" value="Trypsin-like serine proteases"/>
    <property type="match status" value="2"/>
</dbReference>
<dbReference type="InterPro" id="IPR002548">
    <property type="entry name" value="Alpha_E1_glycop"/>
</dbReference>
<dbReference type="InterPro" id="IPR000936">
    <property type="entry name" value="Alpha_E2_glycop"/>
</dbReference>
<dbReference type="InterPro" id="IPR002533">
    <property type="entry name" value="Alpha_E3_glycop"/>
</dbReference>
<dbReference type="InterPro" id="IPR042304">
    <property type="entry name" value="Alphavir_E2_A"/>
</dbReference>
<dbReference type="InterPro" id="IPR042305">
    <property type="entry name" value="Alphavir_E2_B"/>
</dbReference>
<dbReference type="InterPro" id="IPR042306">
    <property type="entry name" value="Alphavir_E2_C"/>
</dbReference>
<dbReference type="InterPro" id="IPR000336">
    <property type="entry name" value="Flavivir/Alphavir_Ig-like_sf"/>
</dbReference>
<dbReference type="InterPro" id="IPR036253">
    <property type="entry name" value="Glycoprot_cen/dimer_sf"/>
</dbReference>
<dbReference type="InterPro" id="IPR038055">
    <property type="entry name" value="Glycoprot_E_dimer_dom"/>
</dbReference>
<dbReference type="InterPro" id="IPR014756">
    <property type="entry name" value="Ig_E-set"/>
</dbReference>
<dbReference type="InterPro" id="IPR009003">
    <property type="entry name" value="Peptidase_S1_PA"/>
</dbReference>
<dbReference type="InterPro" id="IPR043504">
    <property type="entry name" value="Peptidase_S1_PA_chymotrypsin"/>
</dbReference>
<dbReference type="InterPro" id="IPR000930">
    <property type="entry name" value="Peptidase_S3"/>
</dbReference>
<dbReference type="Pfam" id="PF01589">
    <property type="entry name" value="Alpha_E1_glycop"/>
    <property type="match status" value="1"/>
</dbReference>
<dbReference type="Pfam" id="PF00943">
    <property type="entry name" value="Alpha_E2_glycop"/>
    <property type="match status" value="1"/>
</dbReference>
<dbReference type="Pfam" id="PF01563">
    <property type="entry name" value="Alpha_E3_glycop"/>
    <property type="match status" value="1"/>
</dbReference>
<dbReference type="Pfam" id="PF00944">
    <property type="entry name" value="Peptidase_S3"/>
    <property type="match status" value="1"/>
</dbReference>
<dbReference type="PRINTS" id="PR00798">
    <property type="entry name" value="TOGAVIRIN"/>
</dbReference>
<dbReference type="SUPFAM" id="SSF81296">
    <property type="entry name" value="E set domains"/>
    <property type="match status" value="1"/>
</dbReference>
<dbReference type="SUPFAM" id="SSF50494">
    <property type="entry name" value="Trypsin-like serine proteases"/>
    <property type="match status" value="1"/>
</dbReference>
<dbReference type="SUPFAM" id="SSF56983">
    <property type="entry name" value="Viral glycoprotein, central and dimerisation domains"/>
    <property type="match status" value="1"/>
</dbReference>
<dbReference type="PROSITE" id="PS51690">
    <property type="entry name" value="ALPHAVIRUS_CP"/>
    <property type="match status" value="1"/>
</dbReference>
<feature type="chain" id="PRO_0000041291" description="Capsid protein">
    <location>
        <begin position="1"/>
        <end position="270"/>
    </location>
</feature>
<feature type="chain" id="PRO_0000234325" description="Precursor of protein E3/E2">
    <location>
        <begin position="271"/>
        <end position="756"/>
    </location>
</feature>
<feature type="chain" id="PRO_0000041292" description="Assembly protein E3">
    <location>
        <begin position="271"/>
        <end position="334"/>
    </location>
</feature>
<feature type="chain" id="PRO_0000041293" description="Spike glycoprotein E2">
    <location>
        <begin position="335"/>
        <end position="756"/>
    </location>
</feature>
<feature type="chain" id="PRO_0000041294" description="6K protein">
    <location>
        <begin position="757"/>
        <end position="816"/>
    </location>
</feature>
<feature type="chain" id="PRO_0000041295" description="Spike glycoprotein E1">
    <location>
        <begin position="817"/>
        <end position="1254"/>
    </location>
</feature>
<feature type="topological domain" description="Extracellular" evidence="12">
    <location>
        <begin position="271"/>
        <end position="694"/>
    </location>
</feature>
<feature type="transmembrane region" description="Helical" evidence="12">
    <location>
        <begin position="695"/>
        <end position="715"/>
    </location>
</feature>
<feature type="topological domain" description="Cytoplasmic" evidence="12">
    <location>
        <begin position="716"/>
        <end position="756"/>
    </location>
</feature>
<feature type="topological domain" description="Extracellular" evidence="12">
    <location>
        <begin position="757"/>
        <end position="771"/>
    </location>
</feature>
<feature type="transmembrane region" description="Helical" evidence="12">
    <location>
        <begin position="772"/>
        <end position="792"/>
    </location>
</feature>
<feature type="topological domain" description="Cytoplasmic" evidence="12">
    <location>
        <position position="793"/>
    </location>
</feature>
<feature type="transmembrane region" description="Helical" evidence="12">
    <location>
        <begin position="794"/>
        <end position="814"/>
    </location>
</feature>
<feature type="topological domain" description="Extracellular" evidence="12">
    <location>
        <begin position="815"/>
        <end position="1231"/>
    </location>
</feature>
<feature type="transmembrane region" description="Helical" evidence="12">
    <location>
        <begin position="1232"/>
        <end position="1252"/>
    </location>
</feature>
<feature type="topological domain" description="Cytoplasmic" evidence="12">
    <location>
        <begin position="1253"/>
        <end position="1254"/>
    </location>
</feature>
<feature type="domain" description="Peptidase S3" evidence="13">
    <location>
        <begin position="122"/>
        <end position="270"/>
    </location>
</feature>
<feature type="region of interest" description="Host transcription inhibition" evidence="4">
    <location>
        <begin position="43"/>
        <end position="77"/>
    </location>
</feature>
<feature type="region of interest" description="Disordered" evidence="14">
    <location>
        <begin position="60"/>
        <end position="113"/>
    </location>
</feature>
<feature type="region of interest" description="Binding to the viral RNA" evidence="6">
    <location>
        <begin position="95"/>
        <end position="123"/>
    </location>
</feature>
<feature type="region of interest" description="Ribosome-binding" evidence="6">
    <location>
        <begin position="108"/>
        <end position="122"/>
    </location>
</feature>
<feature type="region of interest" description="Interaction with spike glycoprotein E2" evidence="3">
    <location>
        <begin position="164"/>
        <end position="169"/>
    </location>
</feature>
<feature type="region of interest" description="Dimerization of the capsid protein" evidence="5">
    <location>
        <begin position="192"/>
        <end position="202"/>
    </location>
</feature>
<feature type="region of interest" description="Dimerization of the capsid protein" evidence="5">
    <location>
        <begin position="228"/>
        <end position="232"/>
    </location>
</feature>
<feature type="region of interest" description="Functions as an uncleaved signal peptide for the precursor of protein E3/E2" evidence="2">
    <location>
        <begin position="271"/>
        <end position="282"/>
    </location>
</feature>
<feature type="region of interest" description="Interaction with host Mxra8 receptor" evidence="16">
    <location>
        <begin position="360"/>
        <end position="363"/>
    </location>
</feature>
<feature type="region of interest" description="Interaction with host Mxra8 receptor" evidence="16">
    <location>
        <begin position="396"/>
        <end position="398"/>
    </location>
</feature>
<feature type="region of interest" description="Interaction with host Mxra8 receptor" evidence="16">
    <location>
        <begin position="518"/>
        <end position="521"/>
    </location>
</feature>
<feature type="region of interest" description="Interaction with host Mxra8 receptor" evidence="16">
    <location>
        <begin position="550"/>
        <end position="556"/>
    </location>
</feature>
<feature type="region of interest" description="Interaction with the capsid protein" evidence="3">
    <location>
        <begin position="724"/>
        <end position="728"/>
    </location>
</feature>
<feature type="region of interest" description="Transient transmembrane before p62-6K protein processing" evidence="12">
    <location>
        <begin position="729"/>
        <end position="749"/>
    </location>
</feature>
<feature type="region of interest" description="E1 fusion peptide loop" evidence="11">
    <location>
        <begin position="900"/>
        <end position="917"/>
    </location>
</feature>
<feature type="short sequence motif" description="Nuclear localization signal" evidence="4">
    <location>
        <begin position="70"/>
        <end position="108"/>
    </location>
</feature>
<feature type="short sequence motif" description="Nuclear export signal" evidence="4">
    <location>
        <begin position="153"/>
        <end position="163"/>
    </location>
</feature>
<feature type="compositionally biased region" description="Basic residues" evidence="14">
    <location>
        <begin position="84"/>
        <end position="110"/>
    </location>
</feature>
<feature type="active site" description="Charge relay system" evidence="13">
    <location>
        <position position="148"/>
    </location>
</feature>
<feature type="active site" description="Charge relay system" evidence="13">
    <location>
        <position position="170"/>
    </location>
</feature>
<feature type="active site" description="Charge relay system" evidence="13">
    <location>
        <position position="222"/>
    </location>
</feature>
<feature type="site" description="Involved in dimerization of the capsid protein" evidence="10">
    <location>
        <position position="196"/>
    </location>
</feature>
<feature type="site" description="Involved in dimerization of the capsid protein" evidence="10">
    <location>
        <position position="229"/>
    </location>
</feature>
<feature type="site" description="Cleavage; by autolysis" evidence="2">
    <location>
        <begin position="270"/>
        <end position="271"/>
    </location>
</feature>
<feature type="site" description="Cleavage; by host furin" evidence="2">
    <location>
        <begin position="334"/>
        <end position="335"/>
    </location>
</feature>
<feature type="site" description="Cleavage; by host signal peptidase" evidence="2">
    <location>
        <begin position="756"/>
        <end position="757"/>
    </location>
</feature>
<feature type="site" description="Cleavage; by host signal peptidase" evidence="2">
    <location>
        <begin position="816"/>
        <end position="817"/>
    </location>
</feature>
<feature type="lipid moiety-binding region" description="S-palmitoyl cysteine; by host" evidence="12">
    <location>
        <position position="719"/>
    </location>
</feature>
<feature type="lipid moiety-binding region" description="S-palmitoyl cysteine; by host" evidence="3">
    <location>
        <position position="729"/>
    </location>
</feature>
<feature type="lipid moiety-binding region" description="S-palmitoyl cysteine; by host" evidence="9">
    <location>
        <position position="749"/>
    </location>
</feature>
<feature type="lipid moiety-binding region" description="S-palmitoyl cysteine; by host" evidence="9">
    <location>
        <position position="750"/>
    </location>
</feature>
<feature type="lipid moiety-binding region" description="S-palmitoyl cysteine; by host" evidence="9">
    <location>
        <position position="1249"/>
    </location>
</feature>
<feature type="lipid moiety-binding region" description="S-stearoyl cysteine; by host" evidence="1">
    <location>
        <position position="1249"/>
    </location>
</feature>
<feature type="glycosylation site" description="N-linked (GlcNAc...) asparagine; by host" evidence="12">
    <location>
        <position position="281"/>
    </location>
</feature>
<feature type="glycosylation site" description="N-linked (GlcNAc...) asparagine; by host" evidence="12">
    <location>
        <position position="328"/>
    </location>
</feature>
<feature type="glycosylation site" description="N-linked (GlcNAc...) asparagine; by host" evidence="9">
    <location>
        <position position="534"/>
    </location>
</feature>
<feature type="glycosylation site" description="N-linked (GlcNAc...) asparagine; by host" evidence="9">
    <location>
        <position position="596"/>
    </location>
</feature>
<feature type="glycosylation site" description="N-linked (GlcNAc...) asparagine; by host" evidence="9">
    <location>
        <position position="957"/>
    </location>
</feature>
<feature type="disulfide bond" evidence="1">
    <location>
        <begin position="122"/>
        <end position="137"/>
    </location>
</feature>
<feature type="disulfide bond" evidence="8">
    <location>
        <begin position="277"/>
        <end position="286"/>
    </location>
</feature>
<feature type="disulfide bond" evidence="8">
    <location>
        <begin position="291"/>
        <end position="295"/>
    </location>
</feature>
<feature type="disulfide bond" evidence="8">
    <location>
        <begin position="294"/>
        <end position="326"/>
    </location>
</feature>
<feature type="disulfide bond" evidence="7">
    <location>
        <begin position="353"/>
        <end position="459"/>
    </location>
</feature>
<feature type="disulfide bond" evidence="7">
    <location>
        <begin position="356"/>
        <end position="362"/>
    </location>
</feature>
<feature type="disulfide bond" evidence="7">
    <location>
        <begin position="425"/>
        <end position="439"/>
    </location>
</feature>
<feature type="disulfide bond" evidence="8">
    <location>
        <begin position="487"/>
        <end position="599"/>
    </location>
</feature>
<feature type="disulfide bond" evidence="8">
    <location>
        <begin position="535"/>
        <end position="559"/>
    </location>
</feature>
<feature type="disulfide bond" evidence="8">
    <location>
        <begin position="537"/>
        <end position="554"/>
    </location>
</feature>
<feature type="disulfide bond" evidence="8">
    <location>
        <begin position="729"/>
        <end position="750"/>
    </location>
</feature>
<feature type="disulfide bond" evidence="7">
    <location>
        <begin position="865"/>
        <end position="930"/>
    </location>
</feature>
<feature type="disulfide bond" evidence="7">
    <location>
        <begin position="878"/>
        <end position="910"/>
    </location>
</feature>
<feature type="disulfide bond" evidence="7">
    <location>
        <begin position="879"/>
        <end position="912"/>
    </location>
</feature>
<feature type="disulfide bond" evidence="7">
    <location>
        <begin position="884"/>
        <end position="894"/>
    </location>
</feature>
<feature type="disulfide bond" evidence="7">
    <location>
        <begin position="1075"/>
        <end position="1087"/>
    </location>
</feature>
<feature type="disulfide bond" evidence="7">
    <location>
        <begin position="1117"/>
        <end position="1192"/>
    </location>
</feature>
<feature type="disulfide bond" evidence="7">
    <location>
        <begin position="1122"/>
        <end position="1196"/>
    </location>
</feature>
<feature type="disulfide bond" evidence="7">
    <location>
        <begin position="1144"/>
        <end position="1186"/>
    </location>
</feature>
<feature type="sequence conflict" description="In Ref. 3; AAA47405." evidence="18" ref="3">
    <original>P</original>
    <variation>S</variation>
    <location>
        <position position="376"/>
    </location>
</feature>
<feature type="sequence conflict" description="In Ref. 4; AA sequence." evidence="18" ref="4">
    <original>W</original>
    <variation>L</variation>
    <location>
        <position position="854"/>
    </location>
</feature>